<proteinExistence type="evidence at protein level"/>
<reference key="1">
    <citation type="submission" date="2006-03" db="EMBL/GenBank/DDBJ databases">
        <authorList>
            <person name="Lun Y.Z."/>
            <person name="Cheng J."/>
            <person name="Guo J."/>
            <person name="Zhang L.Y."/>
            <person name="Zhao B.C."/>
        </authorList>
    </citation>
    <scope>NUCLEOTIDE SEQUENCE [MRNA] (ISOFORM 1)</scope>
    <scope>VARIANT VAL-1005</scope>
</reference>
<reference key="2">
    <citation type="journal article" date="2007" name="BMC Genomics">
        <title>The full-ORF clone resource of the German cDNA consortium.</title>
        <authorList>
            <person name="Bechtel S."/>
            <person name="Rosenfelder H."/>
            <person name="Duda A."/>
            <person name="Schmidt C.P."/>
            <person name="Ernst U."/>
            <person name="Wellenreuther R."/>
            <person name="Mehrle A."/>
            <person name="Schuster C."/>
            <person name="Bahr A."/>
            <person name="Bloecker H."/>
            <person name="Heubner D."/>
            <person name="Hoerlein A."/>
            <person name="Michel G."/>
            <person name="Wedler H."/>
            <person name="Koehrer K."/>
            <person name="Ottenwaelder B."/>
            <person name="Poustka A."/>
            <person name="Wiemann S."/>
            <person name="Schupp I."/>
        </authorList>
    </citation>
    <scope>NUCLEOTIDE SEQUENCE [LARGE SCALE MRNA] (ISOFORM 2)</scope>
    <scope>VARIANT VAL-1005</scope>
    <source>
        <tissue>Skeletal muscle</tissue>
    </source>
</reference>
<reference key="3">
    <citation type="journal article" date="2004" name="Nat. Genet.">
        <title>Complete sequencing and characterization of 21,243 full-length human cDNAs.</title>
        <authorList>
            <person name="Ota T."/>
            <person name="Suzuki Y."/>
            <person name="Nishikawa T."/>
            <person name="Otsuki T."/>
            <person name="Sugiyama T."/>
            <person name="Irie R."/>
            <person name="Wakamatsu A."/>
            <person name="Hayashi K."/>
            <person name="Sato H."/>
            <person name="Nagai K."/>
            <person name="Kimura K."/>
            <person name="Makita H."/>
            <person name="Sekine M."/>
            <person name="Obayashi M."/>
            <person name="Nishi T."/>
            <person name="Shibahara T."/>
            <person name="Tanaka T."/>
            <person name="Ishii S."/>
            <person name="Yamamoto J."/>
            <person name="Saito K."/>
            <person name="Kawai Y."/>
            <person name="Isono Y."/>
            <person name="Nakamura Y."/>
            <person name="Nagahari K."/>
            <person name="Murakami K."/>
            <person name="Yasuda T."/>
            <person name="Iwayanagi T."/>
            <person name="Wagatsuma M."/>
            <person name="Shiratori A."/>
            <person name="Sudo H."/>
            <person name="Hosoiri T."/>
            <person name="Kaku Y."/>
            <person name="Kodaira H."/>
            <person name="Kondo H."/>
            <person name="Sugawara M."/>
            <person name="Takahashi M."/>
            <person name="Kanda K."/>
            <person name="Yokoi T."/>
            <person name="Furuya T."/>
            <person name="Kikkawa E."/>
            <person name="Omura Y."/>
            <person name="Abe K."/>
            <person name="Kamihara K."/>
            <person name="Katsuta N."/>
            <person name="Sato K."/>
            <person name="Tanikawa M."/>
            <person name="Yamazaki M."/>
            <person name="Ninomiya K."/>
            <person name="Ishibashi T."/>
            <person name="Yamashita H."/>
            <person name="Murakawa K."/>
            <person name="Fujimori K."/>
            <person name="Tanai H."/>
            <person name="Kimata M."/>
            <person name="Watanabe M."/>
            <person name="Hiraoka S."/>
            <person name="Chiba Y."/>
            <person name="Ishida S."/>
            <person name="Ono Y."/>
            <person name="Takiguchi S."/>
            <person name="Watanabe S."/>
            <person name="Yosida M."/>
            <person name="Hotuta T."/>
            <person name="Kusano J."/>
            <person name="Kanehori K."/>
            <person name="Takahashi-Fujii A."/>
            <person name="Hara H."/>
            <person name="Tanase T.-O."/>
            <person name="Nomura Y."/>
            <person name="Togiya S."/>
            <person name="Komai F."/>
            <person name="Hara R."/>
            <person name="Takeuchi K."/>
            <person name="Arita M."/>
            <person name="Imose N."/>
            <person name="Musashino K."/>
            <person name="Yuuki H."/>
            <person name="Oshima A."/>
            <person name="Sasaki N."/>
            <person name="Aotsuka S."/>
            <person name="Yoshikawa Y."/>
            <person name="Matsunawa H."/>
            <person name="Ichihara T."/>
            <person name="Shiohata N."/>
            <person name="Sano S."/>
            <person name="Moriya S."/>
            <person name="Momiyama H."/>
            <person name="Satoh N."/>
            <person name="Takami S."/>
            <person name="Terashima Y."/>
            <person name="Suzuki O."/>
            <person name="Nakagawa S."/>
            <person name="Senoh A."/>
            <person name="Mizoguchi H."/>
            <person name="Goto Y."/>
            <person name="Shimizu F."/>
            <person name="Wakebe H."/>
            <person name="Hishigaki H."/>
            <person name="Watanabe T."/>
            <person name="Sugiyama A."/>
            <person name="Takemoto M."/>
            <person name="Kawakami B."/>
            <person name="Yamazaki M."/>
            <person name="Watanabe K."/>
            <person name="Kumagai A."/>
            <person name="Itakura S."/>
            <person name="Fukuzumi Y."/>
            <person name="Fujimori Y."/>
            <person name="Komiyama M."/>
            <person name="Tashiro H."/>
            <person name="Tanigami A."/>
            <person name="Fujiwara T."/>
            <person name="Ono T."/>
            <person name="Yamada K."/>
            <person name="Fujii Y."/>
            <person name="Ozaki K."/>
            <person name="Hirao M."/>
            <person name="Ohmori Y."/>
            <person name="Kawabata A."/>
            <person name="Hikiji T."/>
            <person name="Kobatake N."/>
            <person name="Inagaki H."/>
            <person name="Ikema Y."/>
            <person name="Okamoto S."/>
            <person name="Okitani R."/>
            <person name="Kawakami T."/>
            <person name="Noguchi S."/>
            <person name="Itoh T."/>
            <person name="Shigeta K."/>
            <person name="Senba T."/>
            <person name="Matsumura K."/>
            <person name="Nakajima Y."/>
            <person name="Mizuno T."/>
            <person name="Morinaga M."/>
            <person name="Sasaki M."/>
            <person name="Togashi T."/>
            <person name="Oyama M."/>
            <person name="Hata H."/>
            <person name="Watanabe M."/>
            <person name="Komatsu T."/>
            <person name="Mizushima-Sugano J."/>
            <person name="Satoh T."/>
            <person name="Shirai Y."/>
            <person name="Takahashi Y."/>
            <person name="Nakagawa K."/>
            <person name="Okumura K."/>
            <person name="Nagase T."/>
            <person name="Nomura N."/>
            <person name="Kikuchi H."/>
            <person name="Masuho Y."/>
            <person name="Yamashita R."/>
            <person name="Nakai K."/>
            <person name="Yada T."/>
            <person name="Nakamura Y."/>
            <person name="Ohara O."/>
            <person name="Isogai T."/>
            <person name="Sugano S."/>
        </authorList>
    </citation>
    <scope>NUCLEOTIDE SEQUENCE [LARGE SCALE MRNA] (ISOFORM 1)</scope>
    <scope>VARIANT VAL-1005</scope>
    <source>
        <tissue>Corpus callosum</tissue>
        <tissue>Kidney epithelium</tissue>
    </source>
</reference>
<reference key="4">
    <citation type="journal article" date="2006" name="Nature">
        <title>DNA sequence of human chromosome 17 and analysis of rearrangement in the human lineage.</title>
        <authorList>
            <person name="Zody M.C."/>
            <person name="Garber M."/>
            <person name="Adams D.J."/>
            <person name="Sharpe T."/>
            <person name="Harrow J."/>
            <person name="Lupski J.R."/>
            <person name="Nicholson C."/>
            <person name="Searle S.M."/>
            <person name="Wilming L."/>
            <person name="Young S.K."/>
            <person name="Abouelleil A."/>
            <person name="Allen N.R."/>
            <person name="Bi W."/>
            <person name="Bloom T."/>
            <person name="Borowsky M.L."/>
            <person name="Bugalter B.E."/>
            <person name="Butler J."/>
            <person name="Chang J.L."/>
            <person name="Chen C.-K."/>
            <person name="Cook A."/>
            <person name="Corum B."/>
            <person name="Cuomo C.A."/>
            <person name="de Jong P.J."/>
            <person name="DeCaprio D."/>
            <person name="Dewar K."/>
            <person name="FitzGerald M."/>
            <person name="Gilbert J."/>
            <person name="Gibson R."/>
            <person name="Gnerre S."/>
            <person name="Goldstein S."/>
            <person name="Grafham D.V."/>
            <person name="Grocock R."/>
            <person name="Hafez N."/>
            <person name="Hagopian D.S."/>
            <person name="Hart E."/>
            <person name="Norman C.H."/>
            <person name="Humphray S."/>
            <person name="Jaffe D.B."/>
            <person name="Jones M."/>
            <person name="Kamal M."/>
            <person name="Khodiyar V.K."/>
            <person name="LaButti K."/>
            <person name="Laird G."/>
            <person name="Lehoczky J."/>
            <person name="Liu X."/>
            <person name="Lokyitsang T."/>
            <person name="Loveland J."/>
            <person name="Lui A."/>
            <person name="Macdonald P."/>
            <person name="Major J.E."/>
            <person name="Matthews L."/>
            <person name="Mauceli E."/>
            <person name="McCarroll S.A."/>
            <person name="Mihalev A.H."/>
            <person name="Mudge J."/>
            <person name="Nguyen C."/>
            <person name="Nicol R."/>
            <person name="O'Leary S.B."/>
            <person name="Osoegawa K."/>
            <person name="Schwartz D.C."/>
            <person name="Shaw-Smith C."/>
            <person name="Stankiewicz P."/>
            <person name="Steward C."/>
            <person name="Swarbreck D."/>
            <person name="Venkataraman V."/>
            <person name="Whittaker C.A."/>
            <person name="Yang X."/>
            <person name="Zimmer A.R."/>
            <person name="Bradley A."/>
            <person name="Hubbard T."/>
            <person name="Birren B.W."/>
            <person name="Rogers J."/>
            <person name="Lander E.S."/>
            <person name="Nusbaum C."/>
        </authorList>
    </citation>
    <scope>NUCLEOTIDE SEQUENCE [LARGE SCALE GENOMIC DNA]</scope>
</reference>
<reference key="5">
    <citation type="journal article" date="2004" name="Genome Res.">
        <title>The status, quality, and expansion of the NIH full-length cDNA project: the Mammalian Gene Collection (MGC).</title>
        <authorList>
            <consortium name="The MGC Project Team"/>
        </authorList>
    </citation>
    <scope>NUCLEOTIDE SEQUENCE [LARGE SCALE MRNA] (ISOFORM 1)</scope>
    <scope>VARIANT VAL-1005</scope>
    <source>
        <tissue>Lung carcinoma</tissue>
        <tissue>Uterine adenocarcinoma</tissue>
    </source>
</reference>
<reference key="6">
    <citation type="journal article" date="2009" name="Mol. Cell">
        <title>RPA-like mammalian Ctc1-Stn1-Ten1 complex binds to single-stranded DNA and protects telomeres independently of the Pot1 pathway.</title>
        <authorList>
            <person name="Miyake Y."/>
            <person name="Nakamura M."/>
            <person name="Nabetani A."/>
            <person name="Shimamura S."/>
            <person name="Tamura M."/>
            <person name="Yonehara S."/>
            <person name="Saito M."/>
            <person name="Ishikawa F."/>
        </authorList>
    </citation>
    <scope>FUNCTION</scope>
    <scope>IDENTIFICATION BY MASS SPECTROMETRY</scope>
    <scope>IDENTIFICATION IN THE CST COMPLEX</scope>
    <scope>SUBCELLULAR LOCATION</scope>
</reference>
<reference key="7">
    <citation type="journal article" date="2009" name="Mol. Cell">
        <title>Conserved telomere maintenance component 1 interacts with STN1 and maintains chromosome ends in higher eukaryotes.</title>
        <authorList>
            <person name="Surovtseva Y.V."/>
            <person name="Churikov D."/>
            <person name="Boltz K.A."/>
            <person name="Song X."/>
            <person name="Lamb J.C."/>
            <person name="Warrington R."/>
            <person name="Leehy K."/>
            <person name="Heacock M."/>
            <person name="Price C.M."/>
            <person name="Shippen D.E."/>
        </authorList>
    </citation>
    <scope>FUNCTION</scope>
</reference>
<reference key="8">
    <citation type="journal article" date="2012" name="EMBO J.">
        <title>Human CST promotes telomere duplex replication and general replication restart after fork stalling.</title>
        <authorList>
            <person name="Stewart J.A."/>
            <person name="Wang F."/>
            <person name="Chaiken M.F."/>
            <person name="Kasbek C."/>
            <person name="Chastain P.D. II"/>
            <person name="Wright W.E."/>
            <person name="Price C.M."/>
        </authorList>
    </citation>
    <scope>FUNCTION</scope>
    <scope>FUNCTION OF THE CST COMPLEX</scope>
</reference>
<reference key="9">
    <citation type="journal article" date="2012" name="Nature">
        <title>The human CST complex is a terminator of telomerase activity.</title>
        <authorList>
            <person name="Chen L.Y."/>
            <person name="Redon S."/>
            <person name="Lingner J."/>
        </authorList>
    </citation>
    <scope>FUNCTION OF THE CST COMPLEX</scope>
    <scope>INTERACTION WITH STN1; ACD AND POT1</scope>
</reference>
<reference key="10">
    <citation type="journal article" date="2014" name="Cell Cycle">
        <title>Human CST abundance determines recovery from diverse forms of DNA damage and replication stress.</title>
        <authorList>
            <person name="Wang F."/>
            <person name="Stewart J."/>
            <person name="Price C.M."/>
        </authorList>
    </citation>
    <scope>FUNCTION OF THE CST COMPLEX</scope>
</reference>
<reference key="11">
    <citation type="journal article" date="2012" name="Am. J. Hum. Genet.">
        <title>Mutations in CTC1, encoding the CTS telomere maintenance complex component 1, cause cerebroretinal microangiopathy with calcifications and cysts.</title>
        <authorList>
            <person name="Polvi A."/>
            <person name="Linnankivi T."/>
            <person name="Kivela T."/>
            <person name="Herva R."/>
            <person name="Keating J.P."/>
            <person name="Makitie O."/>
            <person name="Pareyson D."/>
            <person name="Vainionpaa L."/>
            <person name="Lahtinen J."/>
            <person name="Hovatta I."/>
            <person name="Pihko H."/>
            <person name="Lehesjoki A.E."/>
        </authorList>
    </citation>
    <scope>VARIANTS CRMCC1 VAL-227; GLY-665; GLY-975; CYS-985 DEL; HIS-1142 AND 1196-LEU--ARG-1202 DEL</scope>
</reference>
<reference key="12">
    <citation type="journal article" date="2012" name="Nat. Genet.">
        <title>Mutations in CTC1, encoding conserved telomere maintenance component 1, cause Coats plus.</title>
        <authorList>
            <person name="Anderson B.H."/>
            <person name="Kasher P.R."/>
            <person name="Mayer J."/>
            <person name="Szynkiewicz M."/>
            <person name="Jenkinson E.M."/>
            <person name="Bhaskar S.S."/>
            <person name="Urquhart J.E."/>
            <person name="Daly S.B."/>
            <person name="Dickerson J.E."/>
            <person name="O'Sullivan J."/>
            <person name="Leibundgut E.O."/>
            <person name="Muter J."/>
            <person name="Abdel-Salem G.M."/>
            <person name="Babul-Hirji R."/>
            <person name="Baxter P."/>
            <person name="Berger A."/>
            <person name="Bonafe L."/>
            <person name="Brunstom-Hernandez J.E."/>
            <person name="Buckard J.A."/>
            <person name="Chitayat D."/>
            <person name="Chong W.K."/>
            <person name="Cordelli D.M."/>
            <person name="Ferreira P."/>
            <person name="Fluss J."/>
            <person name="Forrest E.H."/>
            <person name="Franzoni E."/>
            <person name="Garone C."/>
            <person name="Hammans S.R."/>
            <person name="Houge G."/>
            <person name="Hughes I."/>
            <person name="Jacquemont S."/>
            <person name="Jeannet P.Y."/>
            <person name="Jefferson R.J."/>
            <person name="Kumar R."/>
            <person name="Kutschke G."/>
            <person name="Lundberg S."/>
            <person name="Lourenco C.M."/>
            <person name="Mehta R."/>
            <person name="Naidu S."/>
            <person name="Nischal K.K."/>
            <person name="Nunes L."/>
            <person name="Ounap K."/>
            <person name="Philippart M."/>
            <person name="Prabhakar P."/>
            <person name="Risen S.R."/>
            <person name="Schiffmann R."/>
            <person name="Soh C."/>
            <person name="Stephenson J.B."/>
            <person name="Stewart H."/>
            <person name="Stone J."/>
            <person name="Tolmie J.L."/>
            <person name="van der Knaap M.S."/>
            <person name="Vieira J.P."/>
            <person name="Vilain C.N."/>
            <person name="Wakeling E.L."/>
            <person name="Wermenbol V."/>
            <person name="Whitney A."/>
            <person name="Lovell S.C."/>
            <person name="Meyer S."/>
            <person name="Livingston J.H."/>
            <person name="Baerlocher G.M."/>
            <person name="Black G.C."/>
            <person name="Rice G.I."/>
            <person name="Crow Y.J."/>
        </authorList>
    </citation>
    <scope>VARIANTS CRMCC1 MET-259; ARG-503; TRP-840; MET-871; GLY-975; CYS-985 DEL; TRP-987 AND 1196-LEU--ARG-1202 DEL</scope>
</reference>
<comment type="function">
    <text evidence="1 6 7 10 11 12">Component of the CST complex proposed to act as a specialized replication factor promoting DNA replication under conditions of replication stress or natural replication barriers such as the telomere duplex. The CST complex binds single-stranded DNA with high affinity in a sequence-independent manner, while isolated subunits bind DNA with low affinity by themselves. Initially the CST complex has been proposed to protect telomeres from DNA degradation (PubMed:19854130). However, the CST complex has been shown to be involved in several aspects of telomere replication. The CST complex inhibits telomerase and is involved in telomere length homeostasis; it is proposed to bind to newly telomerase-synthesized 3' overhangs and to terminate telomerase action implicating the association with the ACD:POT1 complex thus interfering with its telomerase stimulation activity. The CST complex is also proposed to be involved in fill-in synthesis of the telomeric C-strand probably implicating recruitment and activation of DNA polymerase alpha (PubMed:22763445). The CST complex facilitates recovery from many forms of exogenous DNA damage; seems to be involved in the re-initiation of DNA replication at repaired forks and/or dormant origins (PubMed:25483097). Involved in telomere maintenance (PubMed:19854131, PubMed:22863775). Involved in genome stability (PubMed:22863775). May be in involved in telomeric C-strand fill-in during late S/G2 phase (By similarity).</text>
</comment>
<comment type="subunit">
    <text evidence="6 10">Component of the CST complex, composed of TEN1/C17orf106, CTC1/C17orf68 and STN1; in the complex interacts directly with STN1. Interacts with ACD and POT1.</text>
</comment>
<comment type="interaction">
    <interactant intactId="EBI-2562802">
        <id>Q2NKJ3</id>
    </interactant>
    <interactant intactId="EBI-743771">
        <id>Q92624</id>
        <label>APPBP2</label>
    </interactant>
    <organismsDiffer>false</organismsDiffer>
    <experiments>3</experiments>
</comment>
<comment type="interaction">
    <interactant intactId="EBI-2562802">
        <id>Q2NKJ3</id>
    </interactant>
    <interactant intactId="EBI-746930">
        <id>Q9H668</id>
        <label>STN1</label>
    </interactant>
    <organismsDiffer>false</organismsDiffer>
    <experiments>9</experiments>
</comment>
<comment type="interaction">
    <interactant intactId="EBI-2562802">
        <id>Q2NKJ3</id>
    </interactant>
    <interactant intactId="EBI-2562799">
        <id>Q86WV5</id>
        <label>TEN1</label>
    </interactant>
    <organismsDiffer>false</organismsDiffer>
    <experiments>5</experiments>
</comment>
<comment type="interaction">
    <interactant intactId="EBI-15994382">
        <id>Q2NKJ3-1</id>
    </interactant>
    <interactant intactId="EBI-746930">
        <id>Q9H668</id>
        <label>STN1</label>
    </interactant>
    <organismsDiffer>false</organismsDiffer>
    <experiments>5</experiments>
</comment>
<comment type="interaction">
    <interactant intactId="EBI-15994382">
        <id>Q2NKJ3-1</id>
    </interactant>
    <interactant intactId="EBI-15619703">
        <id>O14773-1</id>
        <label>TPP1</label>
    </interactant>
    <organismsDiffer>false</organismsDiffer>
    <experiments>3</experiments>
</comment>
<comment type="subcellular location">
    <subcellularLocation>
        <location evidence="6">Nucleus</location>
    </subcellularLocation>
    <subcellularLocation>
        <location evidence="6">Chromosome</location>
        <location evidence="6">Telomere</location>
    </subcellularLocation>
    <text evidence="15">A transmembrane region is predicted by sequence analysis tools (ESKW, MEMSAT and Phobius); however, given the telomeric localization of the protein, the relevance of the transmembrane region is unsure in vivo.</text>
</comment>
<comment type="alternative products">
    <event type="alternative splicing"/>
    <isoform>
        <id>Q2NKJ3-1</id>
        <name>1</name>
        <sequence type="displayed"/>
    </isoform>
    <isoform>
        <id>Q2NKJ3-2</id>
        <name>2</name>
        <sequence type="described" ref="VSP_025351 VSP_025352 VSP_025353"/>
    </isoform>
</comment>
<comment type="disease" evidence="8 9">
    <disease id="DI-03394">
        <name>Cerebroretinal microangiopathy with calcifications and cysts 1</name>
        <acronym>CRMCC1</acronym>
        <description>An autosomal recessive pleiomorphic disorder characterized primarily by intracranial calcifications, leukodystrophy, and brain cysts, resulting in spasticity, ataxia, dystonia, seizures, and cognitive decline. Patients also have retinal telangiectasia and exudates (Coats disease) as well as extraneurologic manifestations, including osteopenia with poor bone healing and a high risk of gastrointestinal bleeding and portal hypertension caused by vasculature ectasias in the stomach, small intestine, and liver. Some individuals also have hair, skin, and nail changes, as well as anemia and thrombocytopenia.</description>
        <dbReference type="MIM" id="612199"/>
    </disease>
    <text>The disease is caused by variants affecting the gene represented in this entry.</text>
</comment>
<comment type="miscellaneous">
    <molecule>Isoform 2</molecule>
    <text evidence="15">May be produced at very low levels due to a premature stop codon in the mRNA, leading to nonsense-mediated mRNA decay.</text>
</comment>
<comment type="similarity">
    <text evidence="15">Belongs to the CTC1 family.</text>
</comment>
<comment type="sequence caution" evidence="15">
    <conflict type="erroneous initiation">
        <sequence resource="EMBL-CDS" id="BAB15247"/>
    </conflict>
    <text>Truncated N-terminus.</text>
</comment>
<comment type="sequence caution" evidence="15">
    <conflict type="erroneous initiation">
        <sequence resource="EMBL-CDS" id="CAD38600"/>
    </conflict>
    <text>Extended N-terminus.</text>
</comment>
<keyword id="KW-0002">3D-structure</keyword>
<keyword id="KW-0025">Alternative splicing</keyword>
<keyword id="KW-0158">Chromosome</keyword>
<keyword id="KW-0225">Disease variant</keyword>
<keyword id="KW-0238">DNA-binding</keyword>
<keyword id="KW-0539">Nucleus</keyword>
<keyword id="KW-1267">Proteomics identification</keyword>
<keyword id="KW-1185">Reference proteome</keyword>
<keyword id="KW-0779">Telomere</keyword>
<dbReference type="EMBL" id="DQ451688">
    <property type="protein sequence ID" value="ABE02809.1"/>
    <property type="molecule type" value="mRNA"/>
</dbReference>
<dbReference type="EMBL" id="AL831955">
    <property type="protein sequence ID" value="CAD38600.1"/>
    <property type="status" value="ALT_INIT"/>
    <property type="molecule type" value="mRNA"/>
</dbReference>
<dbReference type="EMBL" id="AK091077">
    <property type="protein sequence ID" value="BAG52278.1"/>
    <property type="molecule type" value="mRNA"/>
</dbReference>
<dbReference type="EMBL" id="AC135178">
    <property type="status" value="NOT_ANNOTATED_CDS"/>
    <property type="molecule type" value="Genomic_DNA"/>
</dbReference>
<dbReference type="EMBL" id="BC026057">
    <property type="protein sequence ID" value="AAH26057.2"/>
    <property type="molecule type" value="mRNA"/>
</dbReference>
<dbReference type="EMBL" id="BC110373">
    <property type="protein sequence ID" value="AAI10374.1"/>
    <property type="molecule type" value="mRNA"/>
</dbReference>
<dbReference type="EMBL" id="BC111783">
    <property type="protein sequence ID" value="AAI11784.1"/>
    <property type="molecule type" value="mRNA"/>
</dbReference>
<dbReference type="EMBL" id="AK025823">
    <property type="protein sequence ID" value="BAB15247.1"/>
    <property type="status" value="ALT_INIT"/>
    <property type="molecule type" value="mRNA"/>
</dbReference>
<dbReference type="CCDS" id="CCDS42259.1">
    <molecule id="Q2NKJ3-1"/>
</dbReference>
<dbReference type="RefSeq" id="NP_079375.3">
    <molecule id="Q2NKJ3-1"/>
    <property type="nucleotide sequence ID" value="NM_025099.5"/>
</dbReference>
<dbReference type="PDB" id="5W2L">
    <property type="method" value="X-ray"/>
    <property type="resolution" value="1.86 A"/>
    <property type="chains" value="A/B=716-880"/>
</dbReference>
<dbReference type="PDB" id="6W6W">
    <property type="method" value="EM"/>
    <property type="resolution" value="3.00 A"/>
    <property type="chains" value="A/B=2-1217"/>
</dbReference>
<dbReference type="PDB" id="7U5C">
    <property type="method" value="EM"/>
    <property type="resolution" value="4.60 A"/>
    <property type="chains" value="E=1-1217"/>
</dbReference>
<dbReference type="PDB" id="8D0B">
    <property type="method" value="EM"/>
    <property type="resolution" value="3.43 A"/>
    <property type="chains" value="A=9-1217"/>
</dbReference>
<dbReference type="PDB" id="8D0K">
    <property type="method" value="EM"/>
    <property type="resolution" value="4.27 A"/>
    <property type="chains" value="A=2-1217"/>
</dbReference>
<dbReference type="PDB" id="8SOJ">
    <property type="method" value="EM"/>
    <property type="resolution" value="3.80 A"/>
    <property type="chains" value="A=1-1217"/>
</dbReference>
<dbReference type="PDB" id="8SOK">
    <property type="method" value="EM"/>
    <property type="resolution" value="4.10 A"/>
    <property type="chains" value="A=1-1217"/>
</dbReference>
<dbReference type="PDBsum" id="5W2L"/>
<dbReference type="PDBsum" id="6W6W"/>
<dbReference type="PDBsum" id="7U5C"/>
<dbReference type="PDBsum" id="8D0B"/>
<dbReference type="PDBsum" id="8D0K"/>
<dbReference type="PDBsum" id="8SOJ"/>
<dbReference type="PDBsum" id="8SOK"/>
<dbReference type="EMDB" id="EMD-21567"/>
<dbReference type="EMDB" id="EMD-26346"/>
<dbReference type="EMDB" id="EMD-26347"/>
<dbReference type="EMDB" id="EMD-27104"/>
<dbReference type="EMDB" id="EMD-27107"/>
<dbReference type="EMDB" id="EMD-40659"/>
<dbReference type="EMDB" id="EMD-40660"/>
<dbReference type="SMR" id="Q2NKJ3"/>
<dbReference type="BioGRID" id="123155">
    <property type="interactions" value="90"/>
</dbReference>
<dbReference type="ComplexPortal" id="CPX-2129">
    <property type="entry name" value="CST complex"/>
</dbReference>
<dbReference type="CORUM" id="Q2NKJ3"/>
<dbReference type="DIP" id="DIP-56900N"/>
<dbReference type="FunCoup" id="Q2NKJ3">
    <property type="interactions" value="2251"/>
</dbReference>
<dbReference type="IntAct" id="Q2NKJ3">
    <property type="interactions" value="55"/>
</dbReference>
<dbReference type="STRING" id="9606.ENSP00000498499"/>
<dbReference type="iPTMnet" id="Q2NKJ3"/>
<dbReference type="PhosphoSitePlus" id="Q2NKJ3"/>
<dbReference type="BioMuta" id="CTC1"/>
<dbReference type="DMDM" id="292495002"/>
<dbReference type="jPOST" id="Q2NKJ3"/>
<dbReference type="MassIVE" id="Q2NKJ3"/>
<dbReference type="PaxDb" id="9606-ENSP00000313759"/>
<dbReference type="PeptideAtlas" id="Q2NKJ3"/>
<dbReference type="ProteomicsDB" id="61406">
    <molecule id="Q2NKJ3-1"/>
</dbReference>
<dbReference type="ProteomicsDB" id="61407">
    <molecule id="Q2NKJ3-2"/>
</dbReference>
<dbReference type="Pumba" id="Q2NKJ3"/>
<dbReference type="Antibodypedia" id="47974">
    <property type="antibodies" value="55 antibodies from 11 providers"/>
</dbReference>
<dbReference type="DNASU" id="80169"/>
<dbReference type="Ensembl" id="ENST00000449476.7">
    <molecule id="Q2NKJ3-2"/>
    <property type="protein sequence ID" value="ENSP00000396018.2"/>
    <property type="gene ID" value="ENSG00000178971.17"/>
</dbReference>
<dbReference type="Ensembl" id="ENST00000651323.1">
    <molecule id="Q2NKJ3-1"/>
    <property type="protein sequence ID" value="ENSP00000498499.1"/>
    <property type="gene ID" value="ENSG00000178971.17"/>
</dbReference>
<dbReference type="GeneID" id="80169"/>
<dbReference type="KEGG" id="hsa:80169"/>
<dbReference type="MANE-Select" id="ENST00000651323.1">
    <property type="protein sequence ID" value="ENSP00000498499.1"/>
    <property type="RefSeq nucleotide sequence ID" value="NM_025099.6"/>
    <property type="RefSeq protein sequence ID" value="NP_079375.3"/>
</dbReference>
<dbReference type="UCSC" id="uc002gkq.5">
    <molecule id="Q2NKJ3-1"/>
    <property type="organism name" value="human"/>
</dbReference>
<dbReference type="AGR" id="HGNC:26169"/>
<dbReference type="CTD" id="80169"/>
<dbReference type="DisGeNET" id="80169"/>
<dbReference type="GeneCards" id="CTC1"/>
<dbReference type="GeneReviews" id="CTC1"/>
<dbReference type="HGNC" id="HGNC:26169">
    <property type="gene designation" value="CTC1"/>
</dbReference>
<dbReference type="HPA" id="ENSG00000178971">
    <property type="expression patterns" value="Low tissue specificity"/>
</dbReference>
<dbReference type="MalaCards" id="CTC1"/>
<dbReference type="MIM" id="612199">
    <property type="type" value="phenotype"/>
</dbReference>
<dbReference type="MIM" id="613129">
    <property type="type" value="gene"/>
</dbReference>
<dbReference type="neXtProt" id="NX_Q2NKJ3"/>
<dbReference type="OpenTargets" id="ENSG00000178971"/>
<dbReference type="Orphanet" id="313838">
    <property type="disease" value="Coats plus syndrome"/>
</dbReference>
<dbReference type="Orphanet" id="1775">
    <property type="disease" value="Dyskeratosis congenita"/>
</dbReference>
<dbReference type="PharmGKB" id="PA142672251"/>
<dbReference type="VEuPathDB" id="HostDB:ENSG00000178971"/>
<dbReference type="eggNOG" id="ENOG502RBD3">
    <property type="taxonomic scope" value="Eukaryota"/>
</dbReference>
<dbReference type="GeneTree" id="ENSGT00390000011553"/>
<dbReference type="HOGENOM" id="CLU_008170_0_0_1"/>
<dbReference type="InParanoid" id="Q2NKJ3"/>
<dbReference type="OMA" id="HTDYTPT"/>
<dbReference type="OrthoDB" id="2314520at2759"/>
<dbReference type="PAN-GO" id="Q2NKJ3">
    <property type="GO annotations" value="5 GO annotations based on evolutionary models"/>
</dbReference>
<dbReference type="PhylomeDB" id="Q2NKJ3"/>
<dbReference type="TreeFam" id="TF335866"/>
<dbReference type="PathwayCommons" id="Q2NKJ3"/>
<dbReference type="Reactome" id="R-HSA-174411">
    <property type="pathway name" value="Polymerase switching on the C-strand of the telomere"/>
</dbReference>
<dbReference type="Reactome" id="R-HSA-174430">
    <property type="pathway name" value="Telomere C-strand synthesis initiation"/>
</dbReference>
<dbReference type="SignaLink" id="Q2NKJ3"/>
<dbReference type="BioGRID-ORCS" id="80169">
    <property type="hits" value="271 hits in 1171 CRISPR screens"/>
</dbReference>
<dbReference type="ChiTaRS" id="CTC1">
    <property type="organism name" value="human"/>
</dbReference>
<dbReference type="GenomeRNAi" id="80169"/>
<dbReference type="Pharos" id="Q2NKJ3">
    <property type="development level" value="Tbio"/>
</dbReference>
<dbReference type="PRO" id="PR:Q2NKJ3"/>
<dbReference type="Proteomes" id="UP000005640">
    <property type="component" value="Chromosome 17"/>
</dbReference>
<dbReference type="RNAct" id="Q2NKJ3">
    <property type="molecule type" value="protein"/>
</dbReference>
<dbReference type="Bgee" id="ENSG00000178971">
    <property type="expression patterns" value="Expressed in granulocyte and 124 other cell types or tissues"/>
</dbReference>
<dbReference type="ExpressionAtlas" id="Q2NKJ3">
    <property type="expression patterns" value="baseline and differential"/>
</dbReference>
<dbReference type="GO" id="GO:0000781">
    <property type="term" value="C:chromosome, telomeric region"/>
    <property type="evidence" value="ECO:0000314"/>
    <property type="project" value="UniProtKB"/>
</dbReference>
<dbReference type="GO" id="GO:1990879">
    <property type="term" value="C:CST complex"/>
    <property type="evidence" value="ECO:0000314"/>
    <property type="project" value="BHF-UCL"/>
</dbReference>
<dbReference type="GO" id="GO:0005829">
    <property type="term" value="C:cytosol"/>
    <property type="evidence" value="ECO:0000314"/>
    <property type="project" value="HPA"/>
</dbReference>
<dbReference type="GO" id="GO:0005654">
    <property type="term" value="C:nucleoplasm"/>
    <property type="evidence" value="ECO:0000314"/>
    <property type="project" value="HPA"/>
</dbReference>
<dbReference type="GO" id="GO:0005634">
    <property type="term" value="C:nucleus"/>
    <property type="evidence" value="ECO:0000314"/>
    <property type="project" value="UniProtKB"/>
</dbReference>
<dbReference type="GO" id="GO:0098505">
    <property type="term" value="F:G-rich strand telomeric DNA binding"/>
    <property type="evidence" value="ECO:0000314"/>
    <property type="project" value="BHF-UCL"/>
</dbReference>
<dbReference type="GO" id="GO:0003697">
    <property type="term" value="F:single-stranded DNA binding"/>
    <property type="evidence" value="ECO:0000250"/>
    <property type="project" value="UniProtKB"/>
</dbReference>
<dbReference type="GO" id="GO:0042162">
    <property type="term" value="F:telomeric DNA binding"/>
    <property type="evidence" value="ECO:0000314"/>
    <property type="project" value="BHF-UCL"/>
</dbReference>
<dbReference type="GO" id="GO:0048539">
    <property type="term" value="P:bone marrow development"/>
    <property type="evidence" value="ECO:0007669"/>
    <property type="project" value="Ensembl"/>
</dbReference>
<dbReference type="GO" id="GO:0006974">
    <property type="term" value="P:DNA damage response"/>
    <property type="evidence" value="ECO:0007669"/>
    <property type="project" value="Ensembl"/>
</dbReference>
<dbReference type="GO" id="GO:0071425">
    <property type="term" value="P:hematopoietic stem cell proliferation"/>
    <property type="evidence" value="ECO:0007669"/>
    <property type="project" value="Ensembl"/>
</dbReference>
<dbReference type="GO" id="GO:0035264">
    <property type="term" value="P:multicellular organism growth"/>
    <property type="evidence" value="ECO:0007669"/>
    <property type="project" value="Ensembl"/>
</dbReference>
<dbReference type="GO" id="GO:0032211">
    <property type="term" value="P:negative regulation of telomere maintenance via telomerase"/>
    <property type="evidence" value="ECO:0000314"/>
    <property type="project" value="BHF-UCL"/>
</dbReference>
<dbReference type="GO" id="GO:0045740">
    <property type="term" value="P:positive regulation of DNA replication"/>
    <property type="evidence" value="ECO:0000250"/>
    <property type="project" value="UniProtKB"/>
</dbReference>
<dbReference type="GO" id="GO:0048146">
    <property type="term" value="P:positive regulation of fibroblast proliferation"/>
    <property type="evidence" value="ECO:0007669"/>
    <property type="project" value="Ensembl"/>
</dbReference>
<dbReference type="GO" id="GO:0010389">
    <property type="term" value="P:regulation of G2/M transition of mitotic cell cycle"/>
    <property type="evidence" value="ECO:0007669"/>
    <property type="project" value="Ensembl"/>
</dbReference>
<dbReference type="GO" id="GO:0090399">
    <property type="term" value="P:replicative senescence"/>
    <property type="evidence" value="ECO:0007669"/>
    <property type="project" value="Ensembl"/>
</dbReference>
<dbReference type="GO" id="GO:0048536">
    <property type="term" value="P:spleen development"/>
    <property type="evidence" value="ECO:0007669"/>
    <property type="project" value="Ensembl"/>
</dbReference>
<dbReference type="GO" id="GO:0016233">
    <property type="term" value="P:telomere capping"/>
    <property type="evidence" value="ECO:0000304"/>
    <property type="project" value="BHF-UCL"/>
</dbReference>
<dbReference type="GO" id="GO:0000723">
    <property type="term" value="P:telomere maintenance"/>
    <property type="evidence" value="ECO:0000315"/>
    <property type="project" value="UniProtKB"/>
</dbReference>
<dbReference type="GO" id="GO:0010833">
    <property type="term" value="P:telomere maintenance via telomere lengthening"/>
    <property type="evidence" value="ECO:0000318"/>
    <property type="project" value="GO_Central"/>
</dbReference>
<dbReference type="GO" id="GO:0048538">
    <property type="term" value="P:thymus development"/>
    <property type="evidence" value="ECO:0007669"/>
    <property type="project" value="Ensembl"/>
</dbReference>
<dbReference type="InterPro" id="IPR029156">
    <property type="entry name" value="CTC1"/>
</dbReference>
<dbReference type="InterPro" id="IPR042617">
    <property type="entry name" value="CTC1-like"/>
</dbReference>
<dbReference type="PANTHER" id="PTHR14865">
    <property type="entry name" value="CST COMPLEX SUBUNIT CTC1"/>
    <property type="match status" value="1"/>
</dbReference>
<dbReference type="PANTHER" id="PTHR14865:SF2">
    <property type="entry name" value="CST COMPLEX SUBUNIT CTC1"/>
    <property type="match status" value="1"/>
</dbReference>
<dbReference type="Pfam" id="PF15489">
    <property type="entry name" value="CTC1"/>
    <property type="match status" value="1"/>
</dbReference>
<protein>
    <recommendedName>
        <fullName>CST complex subunit CTC1</fullName>
    </recommendedName>
    <alternativeName>
        <fullName>Conserved telomere maintenance component 1</fullName>
    </alternativeName>
    <alternativeName>
        <fullName>HBV DNAPTP1-transactivated protein B</fullName>
    </alternativeName>
</protein>
<accession>Q2NKJ3</accession>
<accession>B3KR66</accession>
<accession>C9JEX5</accession>
<accession>Q1PCD1</accession>
<accession>Q2TBE3</accession>
<accession>Q8N3S6</accession>
<accession>Q9H6L0</accession>
<organism>
    <name type="scientific">Homo sapiens</name>
    <name type="common">Human</name>
    <dbReference type="NCBI Taxonomy" id="9606"/>
    <lineage>
        <taxon>Eukaryota</taxon>
        <taxon>Metazoa</taxon>
        <taxon>Chordata</taxon>
        <taxon>Craniata</taxon>
        <taxon>Vertebrata</taxon>
        <taxon>Euteleostomi</taxon>
        <taxon>Mammalia</taxon>
        <taxon>Eutheria</taxon>
        <taxon>Euarchontoglires</taxon>
        <taxon>Primates</taxon>
        <taxon>Haplorrhini</taxon>
        <taxon>Catarrhini</taxon>
        <taxon>Hominidae</taxon>
        <taxon>Homo</taxon>
    </lineage>
</organism>
<feature type="chain" id="PRO_0000287181" description="CST complex subunit CTC1">
    <location>
        <begin position="1"/>
        <end position="1217"/>
    </location>
</feature>
<feature type="region of interest" description="Disordered" evidence="2">
    <location>
        <begin position="328"/>
        <end position="347"/>
    </location>
</feature>
<feature type="splice variant" id="VSP_025351" description="In isoform 2." evidence="14">
    <location>
        <begin position="217"/>
        <end position="251"/>
    </location>
</feature>
<feature type="splice variant" id="VSP_025352" description="In isoform 2." evidence="14">
    <original>GKCTRLGSTCPTQT</original>
    <variation>APGGGWDCRSRGDL</variation>
    <location>
        <begin position="1053"/>
        <end position="1066"/>
    </location>
</feature>
<feature type="splice variant" id="VSP_025353" description="In isoform 2." evidence="14">
    <location>
        <begin position="1067"/>
        <end position="1217"/>
    </location>
</feature>
<feature type="sequence variant" id="VAR_067369" description="In CRMCC1; dbSNP:rs199473673." evidence="9">
    <original>A</original>
    <variation>V</variation>
    <location>
        <position position="227"/>
    </location>
</feature>
<feature type="sequence variant" id="VAR_067370" description="In CRMCC1; dbSNP:rs387907080." evidence="8">
    <original>V</original>
    <variation>M</variation>
    <location>
        <position position="259"/>
    </location>
</feature>
<feature type="sequence variant" id="VAR_067371" description="In CRMCC1; dbSNP:rs1320809462." evidence="8">
    <original>G</original>
    <variation>R</variation>
    <location>
        <position position="503"/>
    </location>
</feature>
<feature type="sequence variant" id="VAR_067372" description="In CRMCC1; dbSNP:rs199473676." evidence="9">
    <original>V</original>
    <variation>G</variation>
    <location>
        <position position="665"/>
    </location>
</feature>
<feature type="sequence variant" id="VAR_032282" description="In dbSNP:rs3027238.">
    <original>I</original>
    <variation>V</variation>
    <location>
        <position position="820"/>
    </location>
</feature>
<feature type="sequence variant" id="VAR_067373" description="In CRMCC1; dbSNP:rs373905859." evidence="8">
    <original>R</original>
    <variation>W</variation>
    <location>
        <position position="840"/>
    </location>
</feature>
<feature type="sequence variant" id="VAR_067374" description="In CRMCC1; dbSNP:rs369255297." evidence="8">
    <original>V</original>
    <variation>M</variation>
    <location>
        <position position="871"/>
    </location>
</feature>
<feature type="sequence variant" id="VAR_067375" description="In CRMCC1; dbSNP:rs199473678." evidence="8 9">
    <original>R</original>
    <variation>G</variation>
    <location>
        <position position="975"/>
    </location>
</feature>
<feature type="sequence variant" id="VAR_067376" description="In CRMCC1." evidence="8 9">
    <location>
        <position position="985"/>
    </location>
</feature>
<feature type="sequence variant" id="VAR_067377" description="In CRMCC1; dbSNP:rs202138550." evidence="8">
    <original>R</original>
    <variation>W</variation>
    <location>
        <position position="987"/>
    </location>
</feature>
<feature type="sequence variant" id="VAR_032283" description="In dbSNP:rs3826543." evidence="3 4 5 13">
    <original>I</original>
    <variation>V</variation>
    <location>
        <position position="1005"/>
    </location>
</feature>
<feature type="sequence variant" id="VAR_067378" description="In CRMCC1; dbSNP:rs201455840." evidence="9">
    <original>L</original>
    <variation>H</variation>
    <location>
        <position position="1142"/>
    </location>
</feature>
<feature type="sequence variant" id="VAR_067379" description="In CRMCC1." evidence="8 9">
    <location>
        <begin position="1196"/>
        <end position="1202"/>
    </location>
</feature>
<feature type="sequence conflict" description="In Ref. 2; CAD38600." evidence="15" ref="2">
    <original>L</original>
    <variation>V</variation>
    <location>
        <position position="41"/>
    </location>
</feature>
<feature type="sequence conflict" description="In Ref. 2; CAD38600." evidence="15" ref="2">
    <original>L</original>
    <variation>P</variation>
    <location>
        <position position="425"/>
    </location>
</feature>
<feature type="sequence conflict" description="In Ref. 1; ABE02809 and 3; BAG52278." evidence="15" ref="1 3">
    <original>S</original>
    <variation>I</variation>
    <location>
        <position position="668"/>
    </location>
</feature>
<feature type="sequence conflict" description="In Ref. 2; CAD38600." evidence="15" ref="2">
    <original>S</original>
    <variation>G</variation>
    <location>
        <position position="864"/>
    </location>
</feature>
<feature type="sequence conflict" description="In Ref. 5; AAI10374." evidence="15" ref="5">
    <original>A</original>
    <variation>T</variation>
    <location>
        <position position="900"/>
    </location>
</feature>
<feature type="sequence conflict" description="In Ref. 2; CAD38600." evidence="15" ref="2">
    <original>G</original>
    <variation>E</variation>
    <location>
        <position position="964"/>
    </location>
</feature>
<feature type="helix" evidence="18">
    <location>
        <begin position="10"/>
        <end position="26"/>
    </location>
</feature>
<feature type="strand" evidence="18">
    <location>
        <begin position="30"/>
        <end position="32"/>
    </location>
</feature>
<feature type="helix" evidence="18">
    <location>
        <begin position="38"/>
        <end position="52"/>
    </location>
</feature>
<feature type="helix" evidence="18">
    <location>
        <begin position="70"/>
        <end position="76"/>
    </location>
</feature>
<feature type="strand" evidence="18">
    <location>
        <begin position="81"/>
        <end position="84"/>
    </location>
</feature>
<feature type="helix" evidence="18">
    <location>
        <begin position="89"/>
        <end position="99"/>
    </location>
</feature>
<feature type="strand" evidence="18">
    <location>
        <begin position="101"/>
        <end position="103"/>
    </location>
</feature>
<feature type="strand" evidence="18">
    <location>
        <begin position="114"/>
        <end position="118"/>
    </location>
</feature>
<feature type="strand" evidence="18">
    <location>
        <begin position="122"/>
        <end position="124"/>
    </location>
</feature>
<feature type="turn" evidence="18">
    <location>
        <begin position="125"/>
        <end position="128"/>
    </location>
</feature>
<feature type="strand" evidence="18">
    <location>
        <begin position="134"/>
        <end position="136"/>
    </location>
</feature>
<feature type="strand" evidence="18">
    <location>
        <begin position="141"/>
        <end position="145"/>
    </location>
</feature>
<feature type="helix" evidence="18">
    <location>
        <begin position="151"/>
        <end position="153"/>
    </location>
</feature>
<feature type="strand" evidence="18">
    <location>
        <begin position="156"/>
        <end position="159"/>
    </location>
</feature>
<feature type="strand" evidence="17">
    <location>
        <begin position="164"/>
        <end position="166"/>
    </location>
</feature>
<feature type="strand" evidence="18">
    <location>
        <begin position="178"/>
        <end position="180"/>
    </location>
</feature>
<feature type="strand" evidence="18">
    <location>
        <begin position="186"/>
        <end position="189"/>
    </location>
</feature>
<feature type="helix" evidence="18">
    <location>
        <begin position="206"/>
        <end position="214"/>
    </location>
</feature>
<feature type="strand" evidence="17">
    <location>
        <begin position="228"/>
        <end position="230"/>
    </location>
</feature>
<feature type="strand" evidence="17">
    <location>
        <begin position="240"/>
        <end position="242"/>
    </location>
</feature>
<feature type="strand" evidence="17">
    <location>
        <begin position="245"/>
        <end position="249"/>
    </location>
</feature>
<feature type="strand" evidence="17">
    <location>
        <begin position="260"/>
        <end position="264"/>
    </location>
</feature>
<feature type="helix" evidence="17">
    <location>
        <begin position="269"/>
        <end position="272"/>
    </location>
</feature>
<feature type="strand" evidence="18">
    <location>
        <begin position="280"/>
        <end position="290"/>
    </location>
</feature>
<feature type="strand" evidence="17">
    <location>
        <begin position="292"/>
        <end position="294"/>
    </location>
</feature>
<feature type="strand" evidence="18">
    <location>
        <begin position="295"/>
        <end position="301"/>
    </location>
</feature>
<feature type="strand" evidence="18">
    <location>
        <begin position="307"/>
        <end position="309"/>
    </location>
</feature>
<feature type="turn" evidence="18">
    <location>
        <begin position="312"/>
        <end position="314"/>
    </location>
</feature>
<feature type="strand" evidence="17">
    <location>
        <begin position="354"/>
        <end position="356"/>
    </location>
</feature>
<feature type="strand" evidence="17">
    <location>
        <begin position="364"/>
        <end position="367"/>
    </location>
</feature>
<feature type="turn" evidence="17">
    <location>
        <begin position="368"/>
        <end position="371"/>
    </location>
</feature>
<feature type="strand" evidence="17">
    <location>
        <begin position="372"/>
        <end position="374"/>
    </location>
</feature>
<feature type="strand" evidence="17">
    <location>
        <begin position="376"/>
        <end position="378"/>
    </location>
</feature>
<feature type="strand" evidence="18">
    <location>
        <begin position="379"/>
        <end position="382"/>
    </location>
</feature>
<feature type="turn" evidence="17">
    <location>
        <begin position="391"/>
        <end position="393"/>
    </location>
</feature>
<feature type="strand" evidence="17">
    <location>
        <begin position="400"/>
        <end position="403"/>
    </location>
</feature>
<feature type="strand" evidence="17">
    <location>
        <begin position="405"/>
        <end position="410"/>
    </location>
</feature>
<feature type="strand" evidence="17">
    <location>
        <begin position="420"/>
        <end position="422"/>
    </location>
</feature>
<feature type="strand" evidence="17">
    <location>
        <begin position="429"/>
        <end position="433"/>
    </location>
</feature>
<feature type="strand" evidence="17">
    <location>
        <begin position="444"/>
        <end position="447"/>
    </location>
</feature>
<feature type="helix" evidence="17">
    <location>
        <begin position="450"/>
        <end position="458"/>
    </location>
</feature>
<feature type="helix" evidence="17">
    <location>
        <begin position="464"/>
        <end position="473"/>
    </location>
</feature>
<feature type="turn" evidence="17">
    <location>
        <begin position="474"/>
        <end position="480"/>
    </location>
</feature>
<feature type="turn" evidence="17">
    <location>
        <begin position="482"/>
        <end position="485"/>
    </location>
</feature>
<feature type="helix" evidence="17">
    <location>
        <begin position="488"/>
        <end position="491"/>
    </location>
</feature>
<feature type="strand" evidence="17">
    <location>
        <begin position="497"/>
        <end position="499"/>
    </location>
</feature>
<feature type="helix" evidence="17">
    <location>
        <begin position="502"/>
        <end position="505"/>
    </location>
</feature>
<feature type="helix" evidence="17">
    <location>
        <begin position="508"/>
        <end position="511"/>
    </location>
</feature>
<feature type="turn" evidence="17">
    <location>
        <begin position="512"/>
        <end position="514"/>
    </location>
</feature>
<feature type="helix" evidence="17">
    <location>
        <begin position="525"/>
        <end position="527"/>
    </location>
</feature>
<feature type="strand" evidence="17">
    <location>
        <begin position="529"/>
        <end position="531"/>
    </location>
</feature>
<feature type="strand" evidence="17">
    <location>
        <begin position="535"/>
        <end position="540"/>
    </location>
</feature>
<feature type="helix" evidence="17">
    <location>
        <begin position="554"/>
        <end position="557"/>
    </location>
</feature>
<feature type="turn" evidence="17">
    <location>
        <begin position="562"/>
        <end position="564"/>
    </location>
</feature>
<feature type="helix" evidence="17">
    <location>
        <begin position="569"/>
        <end position="572"/>
    </location>
</feature>
<feature type="helix" evidence="17">
    <location>
        <begin position="577"/>
        <end position="579"/>
    </location>
</feature>
<feature type="helix" evidence="17">
    <location>
        <begin position="583"/>
        <end position="586"/>
    </location>
</feature>
<feature type="strand" evidence="17">
    <location>
        <begin position="589"/>
        <end position="597"/>
    </location>
</feature>
<feature type="strand" evidence="17">
    <location>
        <begin position="602"/>
        <end position="604"/>
    </location>
</feature>
<feature type="strand" evidence="17">
    <location>
        <begin position="608"/>
        <end position="614"/>
    </location>
</feature>
<feature type="turn" evidence="17">
    <location>
        <begin position="616"/>
        <end position="618"/>
    </location>
</feature>
<feature type="strand" evidence="17">
    <location>
        <begin position="621"/>
        <end position="624"/>
    </location>
</feature>
<feature type="strand" evidence="17">
    <location>
        <begin position="629"/>
        <end position="637"/>
    </location>
</feature>
<feature type="helix" evidence="17">
    <location>
        <begin position="645"/>
        <end position="647"/>
    </location>
</feature>
<feature type="strand" evidence="17">
    <location>
        <begin position="650"/>
        <end position="656"/>
    </location>
</feature>
<feature type="strand" evidence="17">
    <location>
        <begin position="658"/>
        <end position="667"/>
    </location>
</feature>
<feature type="helix" evidence="17">
    <location>
        <begin position="672"/>
        <end position="674"/>
    </location>
</feature>
<feature type="strand" evidence="17">
    <location>
        <begin position="677"/>
        <end position="679"/>
    </location>
</feature>
<feature type="strand" evidence="17">
    <location>
        <begin position="681"/>
        <end position="694"/>
    </location>
</feature>
<feature type="strand" evidence="17">
    <location>
        <begin position="697"/>
        <end position="701"/>
    </location>
</feature>
<feature type="strand" evidence="16">
    <location>
        <begin position="728"/>
        <end position="738"/>
    </location>
</feature>
<feature type="strand" evidence="16">
    <location>
        <begin position="742"/>
        <end position="744"/>
    </location>
</feature>
<feature type="strand" evidence="16">
    <location>
        <begin position="760"/>
        <end position="769"/>
    </location>
</feature>
<feature type="strand" evidence="16">
    <location>
        <begin position="774"/>
        <end position="777"/>
    </location>
</feature>
<feature type="strand" evidence="16">
    <location>
        <begin position="795"/>
        <end position="801"/>
    </location>
</feature>
<feature type="helix" evidence="16">
    <location>
        <begin position="802"/>
        <end position="810"/>
    </location>
</feature>
<feature type="strand" evidence="16">
    <location>
        <begin position="816"/>
        <end position="824"/>
    </location>
</feature>
<feature type="turn" evidence="16">
    <location>
        <begin position="827"/>
        <end position="831"/>
    </location>
</feature>
<feature type="strand" evidence="18">
    <location>
        <begin position="835"/>
        <end position="838"/>
    </location>
</feature>
<feature type="helix" evidence="16">
    <location>
        <begin position="843"/>
        <end position="845"/>
    </location>
</feature>
<feature type="strand" evidence="16">
    <location>
        <begin position="851"/>
        <end position="853"/>
    </location>
</feature>
<feature type="strand" evidence="16">
    <location>
        <begin position="859"/>
        <end position="862"/>
    </location>
</feature>
<feature type="helix" evidence="16">
    <location>
        <begin position="865"/>
        <end position="873"/>
    </location>
</feature>
<feature type="helix" evidence="17">
    <location>
        <begin position="884"/>
        <end position="886"/>
    </location>
</feature>
<feature type="strand" evidence="17">
    <location>
        <begin position="896"/>
        <end position="907"/>
    </location>
</feature>
<feature type="strand" evidence="17">
    <location>
        <begin position="929"/>
        <end position="935"/>
    </location>
</feature>
<feature type="turn" evidence="17">
    <location>
        <begin position="938"/>
        <end position="940"/>
    </location>
</feature>
<feature type="strand" evidence="17">
    <location>
        <begin position="945"/>
        <end position="950"/>
    </location>
</feature>
<feature type="helix" evidence="17">
    <location>
        <begin position="952"/>
        <end position="954"/>
    </location>
</feature>
<feature type="strand" evidence="17">
    <location>
        <begin position="966"/>
        <end position="976"/>
    </location>
</feature>
<feature type="strand" evidence="17">
    <location>
        <begin position="980"/>
        <end position="985"/>
    </location>
</feature>
<feature type="strand" evidence="17">
    <location>
        <begin position="992"/>
        <end position="994"/>
    </location>
</feature>
<feature type="helix" evidence="17">
    <location>
        <begin position="1012"/>
        <end position="1015"/>
    </location>
</feature>
<feature type="strand" evidence="17">
    <location>
        <begin position="1017"/>
        <end position="1019"/>
    </location>
</feature>
<feature type="strand" evidence="17">
    <location>
        <begin position="1023"/>
        <end position="1025"/>
    </location>
</feature>
<feature type="strand" evidence="17">
    <location>
        <begin position="1028"/>
        <end position="1038"/>
    </location>
</feature>
<feature type="strand" evidence="17">
    <location>
        <begin position="1044"/>
        <end position="1047"/>
    </location>
</feature>
<feature type="strand" evidence="18">
    <location>
        <begin position="1049"/>
        <end position="1053"/>
    </location>
</feature>
<feature type="strand" evidence="17">
    <location>
        <begin position="1057"/>
        <end position="1059"/>
    </location>
</feature>
<feature type="strand" evidence="17">
    <location>
        <begin position="1072"/>
        <end position="1078"/>
    </location>
</feature>
<feature type="strand" evidence="17">
    <location>
        <begin position="1085"/>
        <end position="1088"/>
    </location>
</feature>
<feature type="turn" evidence="17">
    <location>
        <begin position="1090"/>
        <end position="1092"/>
    </location>
</feature>
<feature type="turn" evidence="17">
    <location>
        <begin position="1094"/>
        <end position="1096"/>
    </location>
</feature>
<feature type="helix" evidence="17">
    <location>
        <begin position="1101"/>
        <end position="1107"/>
    </location>
</feature>
<feature type="strand" evidence="17">
    <location>
        <begin position="1108"/>
        <end position="1114"/>
    </location>
</feature>
<feature type="strand" evidence="18">
    <location>
        <begin position="1117"/>
        <end position="1122"/>
    </location>
</feature>
<feature type="turn" evidence="17">
    <location>
        <begin position="1138"/>
        <end position="1140"/>
    </location>
</feature>
<feature type="helix" evidence="17">
    <location>
        <begin position="1141"/>
        <end position="1145"/>
    </location>
</feature>
<feature type="turn" evidence="17">
    <location>
        <begin position="1149"/>
        <end position="1151"/>
    </location>
</feature>
<feature type="strand" evidence="17">
    <location>
        <begin position="1154"/>
        <end position="1161"/>
    </location>
</feature>
<feature type="strand" evidence="17">
    <location>
        <begin position="1175"/>
        <end position="1177"/>
    </location>
</feature>
<feature type="strand" evidence="18">
    <location>
        <begin position="1181"/>
        <end position="1183"/>
    </location>
</feature>
<feature type="strand" evidence="17">
    <location>
        <begin position="1188"/>
        <end position="1190"/>
    </location>
</feature>
<feature type="strand" evidence="17">
    <location>
        <begin position="1195"/>
        <end position="1203"/>
    </location>
</feature>
<evidence type="ECO:0000250" key="1">
    <source>
        <dbReference type="UniProtKB" id="Q5SUQ9"/>
    </source>
</evidence>
<evidence type="ECO:0000256" key="2">
    <source>
        <dbReference type="SAM" id="MobiDB-lite"/>
    </source>
</evidence>
<evidence type="ECO:0000269" key="3">
    <source>
    </source>
</evidence>
<evidence type="ECO:0000269" key="4">
    <source>
    </source>
</evidence>
<evidence type="ECO:0000269" key="5">
    <source>
    </source>
</evidence>
<evidence type="ECO:0000269" key="6">
    <source>
    </source>
</evidence>
<evidence type="ECO:0000269" key="7">
    <source>
    </source>
</evidence>
<evidence type="ECO:0000269" key="8">
    <source>
    </source>
</evidence>
<evidence type="ECO:0000269" key="9">
    <source>
    </source>
</evidence>
<evidence type="ECO:0000269" key="10">
    <source>
    </source>
</evidence>
<evidence type="ECO:0000269" key="11">
    <source>
    </source>
</evidence>
<evidence type="ECO:0000269" key="12">
    <source>
    </source>
</evidence>
<evidence type="ECO:0000269" key="13">
    <source ref="1"/>
</evidence>
<evidence type="ECO:0000303" key="14">
    <source>
    </source>
</evidence>
<evidence type="ECO:0000305" key="15"/>
<evidence type="ECO:0007829" key="16">
    <source>
        <dbReference type="PDB" id="5W2L"/>
    </source>
</evidence>
<evidence type="ECO:0007829" key="17">
    <source>
        <dbReference type="PDB" id="6W6W"/>
    </source>
</evidence>
<evidence type="ECO:0007829" key="18">
    <source>
        <dbReference type="PDB" id="8D0B"/>
    </source>
</evidence>
<sequence>MAAGRAQVPSSEQAWLEDAQVFIQKTLCPAVKEPNVQLTPLVIDCVKTVWLSQGRNQGSTLPLSYSFVSVQDLKTHQRLPCCSHLSWSSSAYQAWAQEAGPNGNPLPREQLLLLGTLTDLSADLEQECRNGSLYVRDNTGVLSCELIDLDLSWLGHLFLFPRWSYLPPARWNSSGEGHLELWDAPVPVFPLTISPGPVTPIPVLYPESASCLLRLRNKLRGVQRNLAGSLVRLSALVKSKQKAYFILSLGRSHPAVTHVSIIVQVPAQLVWHRALRPGTAYVLTELRVSKIRGQRQHVWMTSQSSRLLLLKPECVQELELELEGPLLEADPKPLPMPSNSEDKKDPESLVRYSRLLSYSGAVTGVLNEPAGLYELDGQLGLCLAYQQFRGLRRVMRPGVCLQLQDVHLLQSVGGGTRRPVLAPCLRGAVLLQSFSRQKPGAHSSRQAYGASLYEQLVWERQLGLPLYLWATKALEELACKLCPHVLRHHQFLQHSSPGSPSLGLQLLAPTLDLLAPPGSPVRNAHNEILEEPHHCPLQKYTRLQTPSSFPTLATLKEEGQRKAWASFDPKALLPLPEASYLPSCQLNRRLAWSWLCLLPSAFCPAQVLLGVLVASSHKGCLQLRDQSGSLPCLLLAKHSQPLSDPRLIGCLVRAERFQLIVERDVRSSFPSWKELSMPGFIQKQQARVYVQFFLADALILPVPRPCLHSATPSTPQTDPTGPEGPHLGQSRLFLLCHKEALMKRNFCVPPGASPEVPKPALSFYVLGSWLGGTQRKEGTGWGLPEPQGNDDNDQKVHLIFFGSSVRWFEFLHPGQVYRLIAPGPATPMLFEKDGSSCISRRPLELAGCASCLTVQDNWTLELESSQDIQDVLDANKSLPESSLTDLLSDNFTDSLVSFSAEILSRTLCEPLVASLWMKLGNTGAMRRCVKLTVALETAECEFPPHLDVYIEDPHLPPSLGLLPGARVHFSQLEKRVSRSHNVYCCFRSSTYVQVLSFPPETTISIPLPHIYLAELLQGGQSPFQATASCHIVSVFSLQLFWVCAYCTSICRQGKCTRLGSTCPTQTAISQAIIRLLVEDGTAEAVVTCRNHHVAAALGLCPREWASLLDFVQVPGRVVLQFAGPGAQLESSARVDEPMTMFLWTLCTSPSVLRPIVLSFELERKPSKIVPLEPPRLQRFQCGELPFLTHVNPRLRLSCLSIRESEYSSSLGILASSC</sequence>
<gene>
    <name type="primary">CTC1</name>
    <name type="synonym">C17orf68</name>
</gene>
<name>CTC1_HUMAN</name>